<organism>
    <name type="scientific">Staphylococcus aureus (strain bovine RF122 / ET3-1)</name>
    <dbReference type="NCBI Taxonomy" id="273036"/>
    <lineage>
        <taxon>Bacteria</taxon>
        <taxon>Bacillati</taxon>
        <taxon>Bacillota</taxon>
        <taxon>Bacilli</taxon>
        <taxon>Bacillales</taxon>
        <taxon>Staphylococcaceae</taxon>
        <taxon>Staphylococcus</taxon>
    </lineage>
</organism>
<keyword id="KW-0028">Amino-acid biosynthesis</keyword>
<keyword id="KW-0963">Cytoplasm</keyword>
<keyword id="KW-0220">Diaminopimelate biosynthesis</keyword>
<keyword id="KW-0456">Lyase</keyword>
<keyword id="KW-0457">Lysine biosynthesis</keyword>
<keyword id="KW-0704">Schiff base</keyword>
<protein>
    <recommendedName>
        <fullName evidence="1">4-hydroxy-tetrahydrodipicolinate synthase</fullName>
        <shortName evidence="1">HTPA synthase</shortName>
        <ecNumber evidence="1">4.3.3.7</ecNumber>
    </recommendedName>
</protein>
<reference key="1">
    <citation type="journal article" date="2007" name="PLoS ONE">
        <title>Molecular correlates of host specialization in Staphylococcus aureus.</title>
        <authorList>
            <person name="Herron-Olson L."/>
            <person name="Fitzgerald J.R."/>
            <person name="Musser J.M."/>
            <person name="Kapur V."/>
        </authorList>
    </citation>
    <scope>NUCLEOTIDE SEQUENCE [LARGE SCALE GENOMIC DNA]</scope>
    <source>
        <strain>bovine RF122 / ET3-1</strain>
    </source>
</reference>
<feature type="chain" id="PRO_1000050279" description="4-hydroxy-tetrahydrodipicolinate synthase">
    <location>
        <begin position="1"/>
        <end position="295"/>
    </location>
</feature>
<feature type="active site" description="Proton donor/acceptor" evidence="1">
    <location>
        <position position="135"/>
    </location>
</feature>
<feature type="active site" description="Schiff-base intermediate with substrate" evidence="1">
    <location>
        <position position="163"/>
    </location>
</feature>
<feature type="binding site" evidence="1">
    <location>
        <position position="47"/>
    </location>
    <ligand>
        <name>pyruvate</name>
        <dbReference type="ChEBI" id="CHEBI:15361"/>
    </ligand>
</feature>
<feature type="binding site" evidence="1">
    <location>
        <position position="206"/>
    </location>
    <ligand>
        <name>pyruvate</name>
        <dbReference type="ChEBI" id="CHEBI:15361"/>
    </ligand>
</feature>
<feature type="site" description="Part of a proton relay during catalysis" evidence="1">
    <location>
        <position position="46"/>
    </location>
</feature>
<feature type="site" description="Part of a proton relay during catalysis" evidence="1">
    <location>
        <position position="109"/>
    </location>
</feature>
<name>DAPA_STAAB</name>
<comment type="function">
    <text evidence="1">Catalyzes the condensation of (S)-aspartate-beta-semialdehyde [(S)-ASA] and pyruvate to 4-hydroxy-tetrahydrodipicolinate (HTPA).</text>
</comment>
<comment type="catalytic activity">
    <reaction evidence="1">
        <text>L-aspartate 4-semialdehyde + pyruvate = (2S,4S)-4-hydroxy-2,3,4,5-tetrahydrodipicolinate + H2O + H(+)</text>
        <dbReference type="Rhea" id="RHEA:34171"/>
        <dbReference type="ChEBI" id="CHEBI:15361"/>
        <dbReference type="ChEBI" id="CHEBI:15377"/>
        <dbReference type="ChEBI" id="CHEBI:15378"/>
        <dbReference type="ChEBI" id="CHEBI:67139"/>
        <dbReference type="ChEBI" id="CHEBI:537519"/>
        <dbReference type="EC" id="4.3.3.7"/>
    </reaction>
</comment>
<comment type="pathway">
    <text evidence="1">Amino-acid biosynthesis; L-lysine biosynthesis via DAP pathway; (S)-tetrahydrodipicolinate from L-aspartate: step 3/4.</text>
</comment>
<comment type="subunit">
    <text evidence="1">Homodimer.</text>
</comment>
<comment type="subcellular location">
    <subcellularLocation>
        <location evidence="1">Cytoplasm</location>
    </subcellularLocation>
</comment>
<comment type="similarity">
    <text evidence="1">Belongs to the DapA family.</text>
</comment>
<comment type="caution">
    <text evidence="2">Was originally thought to be a dihydrodipicolinate synthase (DHDPS), catalyzing the condensation of (S)-aspartate-beta-semialdehyde [(S)-ASA] and pyruvate to dihydrodipicolinate (DHDP). However, it was shown in E.coli that the product of the enzymatic reaction is not dihydrodipicolinate but in fact (4S)-4-hydroxy-2,3,4,5-tetrahydro-(2S)-dipicolinic acid (HTPA), and that the consecutive dehydration reaction leading to DHDP is not spontaneous but catalyzed by DapB.</text>
</comment>
<accession>Q2YXX4</accession>
<evidence type="ECO:0000255" key="1">
    <source>
        <dbReference type="HAMAP-Rule" id="MF_00418"/>
    </source>
</evidence>
<evidence type="ECO:0000305" key="2"/>
<dbReference type="EC" id="4.3.3.7" evidence="1"/>
<dbReference type="EMBL" id="AJ938182">
    <property type="protein sequence ID" value="CAI80939.1"/>
    <property type="molecule type" value="Genomic_DNA"/>
</dbReference>
<dbReference type="RefSeq" id="WP_000149270.1">
    <property type="nucleotide sequence ID" value="NC_007622.1"/>
</dbReference>
<dbReference type="SMR" id="Q2YXX4"/>
<dbReference type="KEGG" id="sab:SAB1250"/>
<dbReference type="HOGENOM" id="CLU_049343_7_0_9"/>
<dbReference type="UniPathway" id="UPA00034">
    <property type="reaction ID" value="UER00017"/>
</dbReference>
<dbReference type="GO" id="GO:0005829">
    <property type="term" value="C:cytosol"/>
    <property type="evidence" value="ECO:0007669"/>
    <property type="project" value="TreeGrafter"/>
</dbReference>
<dbReference type="GO" id="GO:0008840">
    <property type="term" value="F:4-hydroxy-tetrahydrodipicolinate synthase activity"/>
    <property type="evidence" value="ECO:0007669"/>
    <property type="project" value="UniProtKB-UniRule"/>
</dbReference>
<dbReference type="GO" id="GO:0019877">
    <property type="term" value="P:diaminopimelate biosynthetic process"/>
    <property type="evidence" value="ECO:0007669"/>
    <property type="project" value="UniProtKB-UniRule"/>
</dbReference>
<dbReference type="GO" id="GO:0009089">
    <property type="term" value="P:lysine biosynthetic process via diaminopimelate"/>
    <property type="evidence" value="ECO:0007669"/>
    <property type="project" value="UniProtKB-UniRule"/>
</dbReference>
<dbReference type="CDD" id="cd00950">
    <property type="entry name" value="DHDPS"/>
    <property type="match status" value="1"/>
</dbReference>
<dbReference type="Gene3D" id="3.20.20.70">
    <property type="entry name" value="Aldolase class I"/>
    <property type="match status" value="1"/>
</dbReference>
<dbReference type="HAMAP" id="MF_00418">
    <property type="entry name" value="DapA"/>
    <property type="match status" value="1"/>
</dbReference>
<dbReference type="InterPro" id="IPR013785">
    <property type="entry name" value="Aldolase_TIM"/>
</dbReference>
<dbReference type="InterPro" id="IPR005263">
    <property type="entry name" value="DapA"/>
</dbReference>
<dbReference type="InterPro" id="IPR002220">
    <property type="entry name" value="DapA-like"/>
</dbReference>
<dbReference type="InterPro" id="IPR020625">
    <property type="entry name" value="Schiff_base-form_aldolases_AS"/>
</dbReference>
<dbReference type="NCBIfam" id="TIGR00674">
    <property type="entry name" value="dapA"/>
    <property type="match status" value="1"/>
</dbReference>
<dbReference type="PANTHER" id="PTHR12128:SF66">
    <property type="entry name" value="4-HYDROXY-2-OXOGLUTARATE ALDOLASE, MITOCHONDRIAL"/>
    <property type="match status" value="1"/>
</dbReference>
<dbReference type="PANTHER" id="PTHR12128">
    <property type="entry name" value="DIHYDRODIPICOLINATE SYNTHASE"/>
    <property type="match status" value="1"/>
</dbReference>
<dbReference type="Pfam" id="PF00701">
    <property type="entry name" value="DHDPS"/>
    <property type="match status" value="1"/>
</dbReference>
<dbReference type="PIRSF" id="PIRSF001365">
    <property type="entry name" value="DHDPS"/>
    <property type="match status" value="1"/>
</dbReference>
<dbReference type="PRINTS" id="PR00146">
    <property type="entry name" value="DHPICSNTHASE"/>
</dbReference>
<dbReference type="SMART" id="SM01130">
    <property type="entry name" value="DHDPS"/>
    <property type="match status" value="1"/>
</dbReference>
<dbReference type="SUPFAM" id="SSF51569">
    <property type="entry name" value="Aldolase"/>
    <property type="match status" value="1"/>
</dbReference>
<dbReference type="PROSITE" id="PS00666">
    <property type="entry name" value="DHDPS_2"/>
    <property type="match status" value="1"/>
</dbReference>
<proteinExistence type="inferred from homology"/>
<sequence>MTHLFEGVGVALTTPFTNNKVNLEALKAHVNFLLENNAQAIIVNGTTAESPTLTTDEKELILKTVIDLVDKRVPVIAGTGTNDTEKSIQASIQAKALGADAIMLITTYYNKTNQRGLVKHFEAIADAVKLPVVLYNVPSRTNMTIEPETVEILSQHPSIVALKDATNDFEYLEEVKKRIDTNSFALYSGNDDNVVEYYQRGGKGVISVIANVIPKEFQALYDAQQSGLDIQDQFKPIGILLSALSVDINPIPIKALTSYLGFGNYELRLPLITLEDTDTKVLREAYNIFKAGENE</sequence>
<gene>
    <name evidence="1" type="primary">dapA</name>
    <name type="ordered locus">SAB1250</name>
</gene>